<comment type="function">
    <text evidence="3 4 5 6 7 8">On insects, this depressant beta-toxins cause a transient contraction paralysis followed by a slow flaccid paralysis. They bind voltage-independently at site-4 of sodium channels (Nav) and shift the voltage of activation toward more negative potentials thereby affecting sodium channel activation and promoting spontaneous and repetitive firing. This toxin is active against insects and mammals. It is capable of binding to not only cockroach neuronal membranes, but also rat cerebrocortical and hippocampal synaptosomes. This toxin also has potent peripheral and central suppressive effects on rat nociceptive spontaneous responses, thermal hyperalgesia and spinal c-Fos expression induced by formalin and carrageenan, which may be derived from its modulation on the activity of sodium channels of the neurons. Administration of BmKIT2 into rat brain can also suppress the epileptic seizures significantly.</text>
</comment>
<comment type="subcellular location">
    <subcellularLocation>
        <location>Secreted</location>
    </subcellularLocation>
</comment>
<comment type="tissue specificity">
    <text>Expressed by the venom gland.</text>
</comment>
<comment type="domain">
    <text evidence="9">Has the structural arrangement of an alpha-helix connected to antiparallel beta-sheets by disulfide bonds (CS-alpha/beta).</text>
</comment>
<comment type="similarity">
    <text evidence="9">Belongs to the long (4 C-C) scorpion toxin superfamily. Sodium channel inhibitor family. Beta subfamily.</text>
</comment>
<organism>
    <name type="scientific">Olivierus martensii</name>
    <name type="common">Manchurian scorpion</name>
    <name type="synonym">Mesobuthus martensii</name>
    <dbReference type="NCBI Taxonomy" id="34649"/>
    <lineage>
        <taxon>Eukaryota</taxon>
        <taxon>Metazoa</taxon>
        <taxon>Ecdysozoa</taxon>
        <taxon>Arthropoda</taxon>
        <taxon>Chelicerata</taxon>
        <taxon>Arachnida</taxon>
        <taxon>Scorpiones</taxon>
        <taxon>Buthida</taxon>
        <taxon>Buthoidea</taxon>
        <taxon>Buthidae</taxon>
        <taxon>Olivierus</taxon>
    </lineage>
</organism>
<reference key="1">
    <citation type="journal article" date="2000" name="Neurosci. Res.">
        <title>The binding of BmK IT2, a depressant insect-selective scorpion toxin on mammal and insect sodium channels.</title>
        <authorList>
            <person name="Li Y.-J."/>
            <person name="Tan Z.-Y."/>
            <person name="Ji Y.-H."/>
        </authorList>
    </citation>
    <scope>PROTEIN SEQUENCE</scope>
</reference>
<reference key="2">
    <citation type="journal article" date="1994" name="Sci. China, Ser. B, Chem. Life Sci. Earth Sci.">
        <title>Molecular characteristics of four new depressant insect neurotoxins purified from venom of Buthus martensi Karsch by HPLC.</title>
        <authorList>
            <person name="Ji Y.-H."/>
            <person name="Hattori H."/>
            <person name="Xu K."/>
            <person name="Terakawa S."/>
        </authorList>
    </citation>
    <scope>FUNCTION</scope>
</reference>
<reference key="3">
    <citation type="journal article" date="2000" name="Brain Res. Bull.">
        <title>Antihyperalgesia effect of BmK IT2, a depressant insect-selective scorpion toxin in rat by peripheral administration.</title>
        <authorList>
            <person name="Wang C.-Y."/>
            <person name="Tan Z.-Y."/>
            <person name="Chen B."/>
            <person name="Zhao Z.-Q."/>
            <person name="Ji Y.-H."/>
        </authorList>
    </citation>
    <scope>FUNCTION IN ANTIHYPERALGESIA</scope>
</reference>
<reference key="4">
    <citation type="journal article" date="2001" name="Neuropharmacology">
        <title>The inhibitory effects of BmK IT2, a scorpion neurotoxin on rat nociceptive flexion reflex and a possible mechanism for modulating voltage-gated Na(+) channels.</title>
        <authorList>
            <person name="Tan Z.-Y."/>
            <person name="Xiao H."/>
            <person name="Mao X."/>
            <person name="Wang C.-Y."/>
            <person name="Zhao Z.-Q."/>
            <person name="Ji Y.-H."/>
        </authorList>
    </citation>
    <scope>FUNCTION IN INHIBITION OF NOCICEPTION</scope>
</reference>
<reference key="5">
    <citation type="journal article" date="2003" name="J. Neurosci. Res.">
        <title>Suppressive effects of BmK IT2 on nociceptive behavior and c-Fos expression in spinal cord induced by formalin.</title>
        <authorList>
            <person name="Zhang X.-Y."/>
            <person name="Bai Z.-T."/>
            <person name="Chai Z.-F."/>
            <person name="Zhang J.-W."/>
            <person name="Liu Y."/>
            <person name="Ji Y.-H."/>
        </authorList>
    </citation>
    <scope>FUNCTION IN INHIBITION OF NOCICEPTION</scope>
</reference>
<reference key="6">
    <citation type="journal article" date="2006" name="Pharmacol. Res.">
        <title>The binding of BmK IT2 on mammal and insect sodium channels by surface plasmon resonance assay.</title>
        <authorList>
            <person name="Chai Z.-F."/>
            <person name="Bai Z.-T."/>
            <person name="Liu T."/>
            <person name="Pang X.-Y."/>
            <person name="Ji Y.-H."/>
        </authorList>
    </citation>
    <scope>FUNCTION</scope>
</reference>
<reference key="7">
    <citation type="journal article" date="2007" name="Brain Res. Bull.">
        <title>Suppression by intrathecal BmK IT2 on rat spontaneous pain behaviors and spinal c-Fos expression induced by formalin.</title>
        <authorList>
            <person name="Bai Z.-T."/>
            <person name="Liu T."/>
            <person name="Pang X.-Y."/>
            <person name="Chai Z.-F."/>
            <person name="Ji Y.-H."/>
        </authorList>
    </citation>
    <scope>FUNCTION IN INHIBITION OF NOCICEPTION</scope>
</reference>
<sequence>DGYIKGKSGCRVACLIGNQGCLKDCRAYGASYGYCWTWGLACWCEGLPDNKTWKSESNTCG</sequence>
<dbReference type="SMR" id="P68727"/>
<dbReference type="GO" id="GO:0005576">
    <property type="term" value="C:extracellular region"/>
    <property type="evidence" value="ECO:0007669"/>
    <property type="project" value="UniProtKB-SubCell"/>
</dbReference>
<dbReference type="GO" id="GO:0019871">
    <property type="term" value="F:sodium channel inhibitor activity"/>
    <property type="evidence" value="ECO:0007669"/>
    <property type="project" value="InterPro"/>
</dbReference>
<dbReference type="GO" id="GO:0090729">
    <property type="term" value="F:toxin activity"/>
    <property type="evidence" value="ECO:0007669"/>
    <property type="project" value="UniProtKB-KW"/>
</dbReference>
<dbReference type="GO" id="GO:0006952">
    <property type="term" value="P:defense response"/>
    <property type="evidence" value="ECO:0007669"/>
    <property type="project" value="InterPro"/>
</dbReference>
<dbReference type="CDD" id="cd23106">
    <property type="entry name" value="neurotoxins_LC_scorpion"/>
    <property type="match status" value="1"/>
</dbReference>
<dbReference type="FunFam" id="3.30.30.10:FF:000002">
    <property type="entry name" value="Alpha-like toxin BmK-M1"/>
    <property type="match status" value="1"/>
</dbReference>
<dbReference type="Gene3D" id="3.30.30.10">
    <property type="entry name" value="Knottin, scorpion toxin-like"/>
    <property type="match status" value="1"/>
</dbReference>
<dbReference type="InterPro" id="IPR044062">
    <property type="entry name" value="LCN-type_CS_alpha_beta_dom"/>
</dbReference>
<dbReference type="InterPro" id="IPR003614">
    <property type="entry name" value="Scorpion_toxin-like"/>
</dbReference>
<dbReference type="InterPro" id="IPR036574">
    <property type="entry name" value="Scorpion_toxin-like_sf"/>
</dbReference>
<dbReference type="InterPro" id="IPR018218">
    <property type="entry name" value="Scorpion_toxinL"/>
</dbReference>
<dbReference type="InterPro" id="IPR002061">
    <property type="entry name" value="Scorpion_toxinL/defensin"/>
</dbReference>
<dbReference type="Pfam" id="PF00537">
    <property type="entry name" value="Toxin_3"/>
    <property type="match status" value="1"/>
</dbReference>
<dbReference type="PRINTS" id="PR00285">
    <property type="entry name" value="SCORPNTOXIN"/>
</dbReference>
<dbReference type="SMART" id="SM00505">
    <property type="entry name" value="Knot1"/>
    <property type="match status" value="1"/>
</dbReference>
<dbReference type="SUPFAM" id="SSF57095">
    <property type="entry name" value="Scorpion toxin-like"/>
    <property type="match status" value="1"/>
</dbReference>
<dbReference type="PROSITE" id="PS51863">
    <property type="entry name" value="LCN_CSAB"/>
    <property type="match status" value="1"/>
</dbReference>
<name>SIX2_OLIMR</name>
<evidence type="ECO:0000250" key="1"/>
<evidence type="ECO:0000255" key="2">
    <source>
        <dbReference type="PROSITE-ProRule" id="PRU01210"/>
    </source>
</evidence>
<evidence type="ECO:0000269" key="3">
    <source>
    </source>
</evidence>
<evidence type="ECO:0000269" key="4">
    <source>
    </source>
</evidence>
<evidence type="ECO:0000269" key="5">
    <source>
    </source>
</evidence>
<evidence type="ECO:0000269" key="6">
    <source>
    </source>
</evidence>
<evidence type="ECO:0000269" key="7">
    <source>
    </source>
</evidence>
<evidence type="ECO:0000269" key="8">
    <source>
    </source>
</evidence>
<evidence type="ECO:0000305" key="9"/>
<feature type="chain" id="PRO_0000066722" description="Beta-insect depressant toxin BmKIT2">
    <location>
        <begin position="1"/>
        <end position="61"/>
    </location>
</feature>
<feature type="domain" description="LCN-type CS-alpha/beta" evidence="2">
    <location>
        <begin position="1"/>
        <end position="61"/>
    </location>
</feature>
<feature type="modified residue" description="Glycine amide" evidence="1">
    <location>
        <position position="61"/>
    </location>
</feature>
<feature type="disulfide bond" evidence="2">
    <location>
        <begin position="10"/>
        <end position="60"/>
    </location>
</feature>
<feature type="disulfide bond" evidence="2">
    <location>
        <begin position="14"/>
        <end position="35"/>
    </location>
</feature>
<feature type="disulfide bond" evidence="2">
    <location>
        <begin position="21"/>
        <end position="42"/>
    </location>
</feature>
<feature type="disulfide bond" evidence="2">
    <location>
        <begin position="25"/>
        <end position="44"/>
    </location>
</feature>
<keyword id="KW-0027">Amidation</keyword>
<keyword id="KW-0903">Direct protein sequencing</keyword>
<keyword id="KW-1015">Disulfide bond</keyword>
<keyword id="KW-0872">Ion channel impairing toxin</keyword>
<keyword id="KW-0528">Neurotoxin</keyword>
<keyword id="KW-0964">Secreted</keyword>
<keyword id="KW-0800">Toxin</keyword>
<keyword id="KW-0738">Voltage-gated sodium channel impairing toxin</keyword>
<protein>
    <recommendedName>
        <fullName>Beta-insect depressant toxin BmKIT2</fullName>
    </recommendedName>
    <alternativeName>
        <fullName>Depressant insect toxin BmK IT2</fullName>
    </alternativeName>
</protein>
<proteinExistence type="evidence at protein level"/>
<accession>P68727</accession>